<comment type="subcellular location">
    <subcellularLocation>
        <location>Cell inner membrane</location>
        <topology>Multi-pass membrane protein</topology>
    </subcellularLocation>
</comment>
<comment type="similarity">
    <text evidence="2">Belongs to the major facilitator superfamily. Metabolite:H+ Symporter (MHS) family (TC 2.A.1.6) family.</text>
</comment>
<evidence type="ECO:0000255" key="1"/>
<evidence type="ECO:0000305" key="2"/>
<accession>P37643</accession>
<accession>Q2M7I5</accession>
<dbReference type="EMBL" id="U00039">
    <property type="protein sequence ID" value="AAB18499.1"/>
    <property type="molecule type" value="Genomic_DNA"/>
</dbReference>
<dbReference type="EMBL" id="U00096">
    <property type="protein sequence ID" value="AAC76548.1"/>
    <property type="molecule type" value="Genomic_DNA"/>
</dbReference>
<dbReference type="EMBL" id="AP009048">
    <property type="protein sequence ID" value="BAE77771.1"/>
    <property type="molecule type" value="Genomic_DNA"/>
</dbReference>
<dbReference type="PIR" id="S47743">
    <property type="entry name" value="S47743"/>
</dbReference>
<dbReference type="RefSeq" id="NP_417980.1">
    <property type="nucleotide sequence ID" value="NC_000913.3"/>
</dbReference>
<dbReference type="RefSeq" id="WP_001149003.1">
    <property type="nucleotide sequence ID" value="NZ_SSZK01000039.1"/>
</dbReference>
<dbReference type="SMR" id="P37643"/>
<dbReference type="BioGRID" id="4262156">
    <property type="interactions" value="334"/>
</dbReference>
<dbReference type="FunCoup" id="P37643">
    <property type="interactions" value="50"/>
</dbReference>
<dbReference type="STRING" id="511145.b3523"/>
<dbReference type="TCDB" id="2.A.1.6.10">
    <property type="family name" value="the major facilitator superfamily (mfs)"/>
</dbReference>
<dbReference type="PaxDb" id="511145-b3523"/>
<dbReference type="EnsemblBacteria" id="AAC76548">
    <property type="protein sequence ID" value="AAC76548"/>
    <property type="gene ID" value="b3523"/>
</dbReference>
<dbReference type="GeneID" id="948032"/>
<dbReference type="KEGG" id="ecj:JW3491"/>
<dbReference type="KEGG" id="eco:b3523"/>
<dbReference type="KEGG" id="ecoc:C3026_19085"/>
<dbReference type="PATRIC" id="fig|1411691.4.peg.3195"/>
<dbReference type="EchoBASE" id="EB2160"/>
<dbReference type="eggNOG" id="COG0477">
    <property type="taxonomic scope" value="Bacteria"/>
</dbReference>
<dbReference type="HOGENOM" id="CLU_001265_39_5_6"/>
<dbReference type="InParanoid" id="P37643"/>
<dbReference type="OMA" id="SWVGGYV"/>
<dbReference type="OrthoDB" id="3690818at2"/>
<dbReference type="PhylomeDB" id="P37643"/>
<dbReference type="BioCyc" id="EcoCyc:YHJE-MONOMER"/>
<dbReference type="PRO" id="PR:P37643"/>
<dbReference type="Proteomes" id="UP000000625">
    <property type="component" value="Chromosome"/>
</dbReference>
<dbReference type="GO" id="GO:0005886">
    <property type="term" value="C:plasma membrane"/>
    <property type="evidence" value="ECO:0000314"/>
    <property type="project" value="EcoCyc"/>
</dbReference>
<dbReference type="GO" id="GO:0022857">
    <property type="term" value="F:transmembrane transporter activity"/>
    <property type="evidence" value="ECO:0007669"/>
    <property type="project" value="InterPro"/>
</dbReference>
<dbReference type="CDD" id="cd17369">
    <property type="entry name" value="MFS_ShiA_like"/>
    <property type="match status" value="1"/>
</dbReference>
<dbReference type="FunFam" id="1.20.1250.20:FF:000001">
    <property type="entry name" value="Dicarboxylate MFS transporter"/>
    <property type="match status" value="1"/>
</dbReference>
<dbReference type="FunFam" id="1.20.1250.20:FF:000114">
    <property type="entry name" value="Inner membrane metabolite transporter yhjE"/>
    <property type="match status" value="1"/>
</dbReference>
<dbReference type="Gene3D" id="1.20.1250.20">
    <property type="entry name" value="MFS general substrate transporter like domains"/>
    <property type="match status" value="2"/>
</dbReference>
<dbReference type="InterPro" id="IPR011701">
    <property type="entry name" value="MFS"/>
</dbReference>
<dbReference type="InterPro" id="IPR020846">
    <property type="entry name" value="MFS_dom"/>
</dbReference>
<dbReference type="InterPro" id="IPR005828">
    <property type="entry name" value="MFS_sugar_transport-like"/>
</dbReference>
<dbReference type="InterPro" id="IPR036259">
    <property type="entry name" value="MFS_trans_sf"/>
</dbReference>
<dbReference type="InterPro" id="IPR004736">
    <property type="entry name" value="MHS_symport"/>
</dbReference>
<dbReference type="InterPro" id="IPR005829">
    <property type="entry name" value="Sugar_transporter_CS"/>
</dbReference>
<dbReference type="NCBIfam" id="TIGR00883">
    <property type="entry name" value="2A0106"/>
    <property type="match status" value="1"/>
</dbReference>
<dbReference type="PANTHER" id="PTHR43045:SF2">
    <property type="entry name" value="INNER MEMBRANE METABOLITE TRANSPORT PROTEIN YHJE"/>
    <property type="match status" value="1"/>
</dbReference>
<dbReference type="PANTHER" id="PTHR43045">
    <property type="entry name" value="SHIKIMATE TRANSPORTER"/>
    <property type="match status" value="1"/>
</dbReference>
<dbReference type="Pfam" id="PF07690">
    <property type="entry name" value="MFS_1"/>
    <property type="match status" value="1"/>
</dbReference>
<dbReference type="Pfam" id="PF00083">
    <property type="entry name" value="Sugar_tr"/>
    <property type="match status" value="1"/>
</dbReference>
<dbReference type="SUPFAM" id="SSF103473">
    <property type="entry name" value="MFS general substrate transporter"/>
    <property type="match status" value="1"/>
</dbReference>
<dbReference type="PROSITE" id="PS50850">
    <property type="entry name" value="MFS"/>
    <property type="match status" value="1"/>
</dbReference>
<dbReference type="PROSITE" id="PS00216">
    <property type="entry name" value="SUGAR_TRANSPORT_1"/>
    <property type="match status" value="1"/>
</dbReference>
<protein>
    <recommendedName>
        <fullName>Inner membrane metabolite transport protein YhjE</fullName>
    </recommendedName>
</protein>
<sequence length="440" mass="47208">MQATATTLDHEQEYTPINSRNKVLVASLIGTAIEFFDFYIYATAAVIVFPHIFFPQGDPTAATLQSLATFAIAFVARPIGSAVFGHFGDRVGRKATLVASLLTMGISTVVIGLLPGYATIGIFAPLLLALARFGQGLGLGGEWGGAALLATENAPPRKRALYGSFPQLGAPIGFFFANGTFLLLSWLLTDEQFMSWGWRVPFIFSAVLVIIGLYVRVSLHESPVFEKVAKAKKQVKIPLGTLLTKHVRVTVLGTFIMLATYTLFYIMTVYSMTFSTAAAPVGLGLPRNEVLWMLMMAVIGFGVMVPVAGLLADAFGRRKSMVIITTLIILFALFAFNPLLGSGNPILVFAFLLLGLSLMGLTFGPMGALLPELFPTEVRYTGASFSYNVASILGASVAPYIAAWLQTNYGLGAVGLYLAAMAGLTLIALLLTHETRHQSL</sequence>
<feature type="chain" id="PRO_0000050486" description="Inner membrane metabolite transport protein YhjE">
    <location>
        <begin position="1"/>
        <end position="440"/>
    </location>
</feature>
<feature type="topological domain" description="Cytoplasmic" evidence="1">
    <location>
        <begin position="1"/>
        <end position="34"/>
    </location>
</feature>
<feature type="transmembrane region" description="Helical; Name=1" evidence="1">
    <location>
        <begin position="35"/>
        <end position="55"/>
    </location>
</feature>
<feature type="topological domain" description="Periplasmic" evidence="1">
    <location>
        <begin position="56"/>
        <end position="66"/>
    </location>
</feature>
<feature type="transmembrane region" description="Helical; Name=2" evidence="1">
    <location>
        <begin position="67"/>
        <end position="87"/>
    </location>
</feature>
<feature type="topological domain" description="Cytoplasmic" evidence="1">
    <location>
        <begin position="88"/>
        <end position="108"/>
    </location>
</feature>
<feature type="transmembrane region" description="Helical; Name=3" evidence="1">
    <location>
        <begin position="109"/>
        <end position="129"/>
    </location>
</feature>
<feature type="transmembrane region" description="Helical; Name=4" evidence="1">
    <location>
        <begin position="130"/>
        <end position="150"/>
    </location>
</feature>
<feature type="topological domain" description="Cytoplasmic" evidence="1">
    <location>
        <begin position="151"/>
        <end position="167"/>
    </location>
</feature>
<feature type="transmembrane region" description="Helical; Name=5" evidence="1">
    <location>
        <begin position="168"/>
        <end position="188"/>
    </location>
</feature>
<feature type="topological domain" description="Periplasmic" evidence="1">
    <location>
        <begin position="189"/>
        <end position="192"/>
    </location>
</feature>
<feature type="transmembrane region" description="Helical; Name=6" evidence="1">
    <location>
        <begin position="193"/>
        <end position="213"/>
    </location>
</feature>
<feature type="topological domain" description="Cytoplasmic" evidence="1">
    <location>
        <begin position="214"/>
        <end position="248"/>
    </location>
</feature>
<feature type="transmembrane region" description="Helical; Name=7" evidence="1">
    <location>
        <begin position="249"/>
        <end position="269"/>
    </location>
</feature>
<feature type="topological domain" description="Periplasmic" evidence="1">
    <location>
        <begin position="270"/>
        <end position="289"/>
    </location>
</feature>
<feature type="transmembrane region" description="Helical; Name=8" evidence="1">
    <location>
        <begin position="290"/>
        <end position="310"/>
    </location>
</feature>
<feature type="topological domain" description="Cytoplasmic" evidence="1">
    <location>
        <begin position="311"/>
        <end position="320"/>
    </location>
</feature>
<feature type="transmembrane region" description="Helical; Name=9" evidence="1">
    <location>
        <begin position="321"/>
        <end position="341"/>
    </location>
</feature>
<feature type="topological domain" description="Periplasmic" evidence="1">
    <location>
        <begin position="342"/>
        <end position="345"/>
    </location>
</feature>
<feature type="transmembrane region" description="Helical; Name=10" evidence="1">
    <location>
        <begin position="346"/>
        <end position="366"/>
    </location>
</feature>
<feature type="topological domain" description="Cytoplasmic" evidence="1">
    <location>
        <begin position="367"/>
        <end position="384"/>
    </location>
</feature>
<feature type="transmembrane region" description="Helical; Name=11" evidence="1">
    <location>
        <begin position="385"/>
        <end position="405"/>
    </location>
</feature>
<feature type="topological domain" description="Periplasmic" evidence="1">
    <location>
        <begin position="406"/>
        <end position="410"/>
    </location>
</feature>
<feature type="transmembrane region" description="Helical; Name=12" evidence="1">
    <location>
        <begin position="411"/>
        <end position="431"/>
    </location>
</feature>
<feature type="topological domain" description="Cytoplasmic" evidence="1">
    <location>
        <begin position="432"/>
        <end position="440"/>
    </location>
</feature>
<keyword id="KW-0997">Cell inner membrane</keyword>
<keyword id="KW-1003">Cell membrane</keyword>
<keyword id="KW-0472">Membrane</keyword>
<keyword id="KW-1185">Reference proteome</keyword>
<keyword id="KW-0812">Transmembrane</keyword>
<keyword id="KW-1133">Transmembrane helix</keyword>
<keyword id="KW-0813">Transport</keyword>
<reference key="1">
    <citation type="journal article" date="1994" name="Nucleic Acids Res.">
        <title>Analysis of the Escherichia coli genome. V. DNA sequence of the region from 76.0 to 81.5 minutes.</title>
        <authorList>
            <person name="Sofia H.J."/>
            <person name="Burland V."/>
            <person name="Daniels D.L."/>
            <person name="Plunkett G. III"/>
            <person name="Blattner F.R."/>
        </authorList>
    </citation>
    <scope>NUCLEOTIDE SEQUENCE [LARGE SCALE GENOMIC DNA]</scope>
    <source>
        <strain>K12 / MG1655 / ATCC 47076</strain>
    </source>
</reference>
<reference key="2">
    <citation type="journal article" date="1997" name="Science">
        <title>The complete genome sequence of Escherichia coli K-12.</title>
        <authorList>
            <person name="Blattner F.R."/>
            <person name="Plunkett G. III"/>
            <person name="Bloch C.A."/>
            <person name="Perna N.T."/>
            <person name="Burland V."/>
            <person name="Riley M."/>
            <person name="Collado-Vides J."/>
            <person name="Glasner J.D."/>
            <person name="Rode C.K."/>
            <person name="Mayhew G.F."/>
            <person name="Gregor J."/>
            <person name="Davis N.W."/>
            <person name="Kirkpatrick H.A."/>
            <person name="Goeden M.A."/>
            <person name="Rose D.J."/>
            <person name="Mau B."/>
            <person name="Shao Y."/>
        </authorList>
    </citation>
    <scope>NUCLEOTIDE SEQUENCE [LARGE SCALE GENOMIC DNA]</scope>
    <source>
        <strain>K12 / MG1655 / ATCC 47076</strain>
    </source>
</reference>
<reference key="3">
    <citation type="journal article" date="2006" name="Mol. Syst. Biol.">
        <title>Highly accurate genome sequences of Escherichia coli K-12 strains MG1655 and W3110.</title>
        <authorList>
            <person name="Hayashi K."/>
            <person name="Morooka N."/>
            <person name="Yamamoto Y."/>
            <person name="Fujita K."/>
            <person name="Isono K."/>
            <person name="Choi S."/>
            <person name="Ohtsubo E."/>
            <person name="Baba T."/>
            <person name="Wanner B.L."/>
            <person name="Mori H."/>
            <person name="Horiuchi T."/>
        </authorList>
    </citation>
    <scope>NUCLEOTIDE SEQUENCE [LARGE SCALE GENOMIC DNA]</scope>
    <source>
        <strain>K12 / W3110 / ATCC 27325 / DSM 5911</strain>
    </source>
</reference>
<reference key="4">
    <citation type="journal article" date="2005" name="Science">
        <title>Global topology analysis of the Escherichia coli inner membrane proteome.</title>
        <authorList>
            <person name="Daley D.O."/>
            <person name="Rapp M."/>
            <person name="Granseth E."/>
            <person name="Melen K."/>
            <person name="Drew D."/>
            <person name="von Heijne G."/>
        </authorList>
    </citation>
    <scope>TOPOLOGY [LARGE SCALE ANALYSIS]</scope>
    <source>
        <strain>K12 / MG1655 / ATCC 47076</strain>
    </source>
</reference>
<proteinExistence type="evidence at protein level"/>
<name>YHJE_ECOLI</name>
<organism>
    <name type="scientific">Escherichia coli (strain K12)</name>
    <dbReference type="NCBI Taxonomy" id="83333"/>
    <lineage>
        <taxon>Bacteria</taxon>
        <taxon>Pseudomonadati</taxon>
        <taxon>Pseudomonadota</taxon>
        <taxon>Gammaproteobacteria</taxon>
        <taxon>Enterobacterales</taxon>
        <taxon>Enterobacteriaceae</taxon>
        <taxon>Escherichia</taxon>
    </lineage>
</organism>
<gene>
    <name type="primary">yhjE</name>
    <name type="ordered locus">b3523</name>
    <name type="ordered locus">JW3491</name>
</gene>